<name>TSPO2_HUMAN</name>
<comment type="function">
    <text evidence="3 4 5 6">Cholesterol-binding protein involved in the redistribution of cholesterol from lipid droplets to the endoplasmic reticulum (PubMed:19729679). Required to meet cholesterol demands during erythropoietic differentiation (PubMed:19729679). May play a role in transport processes at the plasma membrane of erythrocytes, including regulating VDAC-mediated ATP export, and import of the heme precursors protoporphyrin IX and 5-aminolevulinic acid (PubMed:27641616, PubMed:30061676, PubMed:31989647).</text>
</comment>
<comment type="subunit">
    <text evidence="4">Homotetramer (PubMed:27641616). May also form homodimer (PubMed:27641616).</text>
</comment>
<comment type="interaction">
    <interactant intactId="EBI-12195249">
        <id>Q5TGU0</id>
    </interactant>
    <interactant intactId="EBI-12078468">
        <id>Q8IVF2-3</id>
        <label>AHNAK2</label>
    </interactant>
    <organismsDiffer>false</organismsDiffer>
    <experiments>3</experiments>
</comment>
<comment type="interaction">
    <interactant intactId="EBI-12195249">
        <id>Q5TGU0</id>
    </interactant>
    <interactant intactId="EBI-13059134">
        <id>Q13520</id>
        <label>AQP6</label>
    </interactant>
    <organismsDiffer>false</organismsDiffer>
    <experiments>3</experiments>
</comment>
<comment type="interaction">
    <interactant intactId="EBI-12195249">
        <id>Q5TGU0</id>
    </interactant>
    <interactant intactId="EBI-11343438">
        <id>Q3SXY8</id>
        <label>ARL13B</label>
    </interactant>
    <organismsDiffer>false</organismsDiffer>
    <experiments>3</experiments>
</comment>
<comment type="interaction">
    <interactant intactId="EBI-12195249">
        <id>Q5TGU0</id>
    </interactant>
    <interactant intactId="EBI-12808270">
        <id>P07307-3</id>
        <label>ASGR2</label>
    </interactant>
    <organismsDiffer>false</organismsDiffer>
    <experiments>3</experiments>
</comment>
<comment type="interaction">
    <interactant intactId="EBI-12195249">
        <id>Q5TGU0</id>
    </interactant>
    <interactant intactId="EBI-12239061">
        <id>Q8WWH4</id>
        <label>ASZ1</label>
    </interactant>
    <organismsDiffer>false</organismsDiffer>
    <experiments>3</experiments>
</comment>
<comment type="interaction">
    <interactant intactId="EBI-12195249">
        <id>Q5TGU0</id>
    </interactant>
    <interactant intactId="EBI-700794">
        <id>Q13323</id>
        <label>BIK</label>
    </interactant>
    <organismsDiffer>false</organismsDiffer>
    <experiments>3</experiments>
</comment>
<comment type="interaction">
    <interactant intactId="EBI-12195249">
        <id>Q5TGU0</id>
    </interactant>
    <interactant intactId="EBI-6657396">
        <id>P19397</id>
        <label>CD53</label>
    </interactant>
    <organismsDiffer>false</organismsDiffer>
    <experiments>3</experiments>
</comment>
<comment type="interaction">
    <interactant intactId="EBI-12195249">
        <id>Q5TGU0</id>
    </interactant>
    <interactant intactId="EBI-2836595">
        <id>Q07108</id>
        <label>CD69</label>
    </interactant>
    <organismsDiffer>false</organismsDiffer>
    <experiments>3</experiments>
</comment>
<comment type="interaction">
    <interactant intactId="EBI-12195249">
        <id>Q5TGU0</id>
    </interactant>
    <interactant intactId="EBI-7797864">
        <id>P11912</id>
        <label>CD79A</label>
    </interactant>
    <organismsDiffer>false</organismsDiffer>
    <experiments>3</experiments>
</comment>
<comment type="interaction">
    <interactant intactId="EBI-12195249">
        <id>Q5TGU0</id>
    </interactant>
    <interactant intactId="EBI-2622997">
        <id>Q9HA82</id>
        <label>CERS4</label>
    </interactant>
    <organismsDiffer>false</organismsDiffer>
    <experiments>3</experiments>
</comment>
<comment type="interaction">
    <interactant intactId="EBI-12195249">
        <id>Q5TGU0</id>
    </interactant>
    <interactant intactId="EBI-9316372">
        <id>O14493</id>
        <label>CLDN4</label>
    </interactant>
    <organismsDiffer>false</organismsDiffer>
    <experiments>3</experiments>
</comment>
<comment type="interaction">
    <interactant intactId="EBI-12195249">
        <id>Q5TGU0</id>
    </interactant>
    <interactant intactId="EBI-2835940">
        <id>P34972</id>
        <label>CNR2</label>
    </interactant>
    <organismsDiffer>false</organismsDiffer>
    <experiments>3</experiments>
</comment>
<comment type="interaction">
    <interactant intactId="EBI-12195249">
        <id>Q5TGU0</id>
    </interactant>
    <interactant intactId="EBI-12211159">
        <id>P29400-2</id>
        <label>COL4A5</label>
    </interactant>
    <organismsDiffer>false</organismsDiffer>
    <experiments>3</experiments>
</comment>
<comment type="interaction">
    <interactant intactId="EBI-12195249">
        <id>Q5TGU0</id>
    </interactant>
    <interactant intactId="EBI-18013275">
        <id>Q7Z7G2</id>
        <label>CPLX4</label>
    </interactant>
    <organismsDiffer>false</organismsDiffer>
    <experiments>3</experiments>
</comment>
<comment type="interaction">
    <interactant intactId="EBI-12195249">
        <id>Q5TGU0</id>
    </interactant>
    <interactant intactId="EBI-6942903">
        <id>Q96BA8</id>
        <label>CREB3L1</label>
    </interactant>
    <organismsDiffer>false</organismsDiffer>
    <experiments>5</experiments>
</comment>
<comment type="interaction">
    <interactant intactId="EBI-12195249">
        <id>Q5TGU0</id>
    </interactant>
    <interactant intactId="EBI-18030204">
        <id>Q9UBT3</id>
        <label>DKK4</label>
    </interactant>
    <organismsDiffer>false</organismsDiffer>
    <experiments>3</experiments>
</comment>
<comment type="interaction">
    <interactant intactId="EBI-12195249">
        <id>Q5TGU0</id>
    </interactant>
    <interactant intactId="EBI-3915253">
        <id>Q15125</id>
        <label>EBP</label>
    </interactant>
    <organismsDiffer>false</organismsDiffer>
    <experiments>3</experiments>
</comment>
<comment type="interaction">
    <interactant intactId="EBI-12195249">
        <id>Q5TGU0</id>
    </interactant>
    <interactant intactId="EBI-1753674">
        <id>P52803</id>
        <label>EFNA5</label>
    </interactant>
    <organismsDiffer>false</organismsDiffer>
    <experiments>3</experiments>
</comment>
<comment type="interaction">
    <interactant intactId="EBI-12195249">
        <id>Q5TGU0</id>
    </interactant>
    <interactant intactId="EBI-4319440">
        <id>P54849</id>
        <label>EMP1</label>
    </interactant>
    <organismsDiffer>false</organismsDiffer>
    <experiments>3</experiments>
</comment>
<comment type="interaction">
    <interactant intactId="EBI-12195249">
        <id>Q5TGU0</id>
    </interactant>
    <interactant intactId="EBI-781551">
        <id>Q9Y282</id>
        <label>ERGIC3</label>
    </interactant>
    <organismsDiffer>false</organismsDiffer>
    <experiments>3</experiments>
</comment>
<comment type="interaction">
    <interactant intactId="EBI-12195249">
        <id>Q5TGU0</id>
    </interactant>
    <interactant intactId="EBI-946830">
        <id>P30040</id>
        <label>ERP29</label>
    </interactant>
    <organismsDiffer>false</organismsDiffer>
    <experiments>3</experiments>
</comment>
<comment type="interaction">
    <interactant intactId="EBI-12195249">
        <id>Q5TGU0</id>
    </interactant>
    <interactant intactId="EBI-2869867">
        <id>P12314</id>
        <label>FCGR1A</label>
    </interactant>
    <organismsDiffer>false</organismsDiffer>
    <experiments>3</experiments>
</comment>
<comment type="interaction">
    <interactant intactId="EBI-12195249">
        <id>Q5TGU0</id>
    </interactant>
    <interactant intactId="EBI-2833872">
        <id>O15552</id>
        <label>FFAR2</label>
    </interactant>
    <organismsDiffer>false</organismsDiffer>
    <experiments>3</experiments>
</comment>
<comment type="interaction">
    <interactant intactId="EBI-12195249">
        <id>Q5TGU0</id>
    </interactant>
    <interactant intactId="EBI-12142257">
        <id>Q8TBE3</id>
        <label>FNDC9</label>
    </interactant>
    <organismsDiffer>false</organismsDiffer>
    <experiments>3</experiments>
</comment>
<comment type="interaction">
    <interactant intactId="EBI-12195249">
        <id>Q5TGU0</id>
    </interactant>
    <interactant intactId="EBI-12175685">
        <id>Q14802-3</id>
        <label>FXYD3</label>
    </interactant>
    <organismsDiffer>false</organismsDiffer>
    <experiments>3</experiments>
</comment>
<comment type="interaction">
    <interactant intactId="EBI-12195249">
        <id>Q5TGU0</id>
    </interactant>
    <interactant intactId="EBI-1058791">
        <id>Q9UJ14</id>
        <label>GGT7</label>
    </interactant>
    <organismsDiffer>false</organismsDiffer>
    <experiments>3</experiments>
</comment>
<comment type="interaction">
    <interactant intactId="EBI-12195249">
        <id>Q5TGU0</id>
    </interactant>
    <interactant intactId="EBI-3909454">
        <id>O95377</id>
        <label>GJB5</label>
    </interactant>
    <organismsDiffer>false</organismsDiffer>
    <experiments>3</experiments>
</comment>
<comment type="interaction">
    <interactant intactId="EBI-12195249">
        <id>Q5TGU0</id>
    </interactant>
    <interactant intactId="EBI-13345167">
        <id>Q8TDT2</id>
        <label>GPR152</label>
    </interactant>
    <organismsDiffer>false</organismsDiffer>
    <experiments>3</experiments>
</comment>
<comment type="interaction">
    <interactant intactId="EBI-12195249">
        <id>Q5TGU0</id>
    </interactant>
    <interactant intactId="EBI-18076404">
        <id>O15529</id>
        <label>GPR42</label>
    </interactant>
    <organismsDiffer>false</organismsDiffer>
    <experiments>3</experiments>
</comment>
<comment type="interaction">
    <interactant intactId="EBI-12195249">
        <id>Q5TGU0</id>
    </interactant>
    <interactant intactId="EBI-720480">
        <id>P24593</id>
        <label>IGFBP5</label>
    </interactant>
    <organismsDiffer>false</organismsDiffer>
    <experiments>3</experiments>
</comment>
<comment type="interaction">
    <interactant intactId="EBI-12195249">
        <id>Q5TGU0</id>
    </interactant>
    <interactant intactId="EBI-12017638">
        <id>P48051</id>
        <label>KCNJ6</label>
    </interactant>
    <organismsDiffer>false</organismsDiffer>
    <experiments>3</experiments>
</comment>
<comment type="interaction">
    <interactant intactId="EBI-12195249">
        <id>Q5TGU0</id>
    </interactant>
    <interactant intactId="EBI-9018187">
        <id>P26715</id>
        <label>KLRC1</label>
    </interactant>
    <organismsDiffer>false</organismsDiffer>
    <experiments>3</experiments>
</comment>
<comment type="interaction">
    <interactant intactId="EBI-12195249">
        <id>Q5TGU0</id>
    </interactant>
    <interactant intactId="EBI-358888">
        <id>Q96AG4</id>
        <label>LRRC59</label>
    </interactant>
    <organismsDiffer>false</organismsDiffer>
    <experiments>3</experiments>
</comment>
<comment type="interaction">
    <interactant intactId="EBI-12195249">
        <id>Q5TGU0</id>
    </interactant>
    <interactant intactId="EBI-3932027">
        <id>P21145</id>
        <label>MAL</label>
    </interactant>
    <organismsDiffer>false</organismsDiffer>
    <experiments>3</experiments>
</comment>
<comment type="interaction">
    <interactant intactId="EBI-12195249">
        <id>Q5TGU0</id>
    </interactant>
    <interactant intactId="EBI-10317612">
        <id>Q9P0N8</id>
        <label>MARCHF2</label>
    </interactant>
    <organismsDiffer>false</organismsDiffer>
    <experiments>3</experiments>
</comment>
<comment type="interaction">
    <interactant intactId="EBI-12195249">
        <id>Q5TGU0</id>
    </interactant>
    <interactant intactId="EBI-11956541">
        <id>Q9GZY8-5</id>
        <label>MFF</label>
    </interactant>
    <organismsDiffer>false</organismsDiffer>
    <experiments>3</experiments>
</comment>
<comment type="interaction">
    <interactant intactId="EBI-12195249">
        <id>Q5TGU0</id>
    </interactant>
    <interactant intactId="EBI-2858252">
        <id>Q6ZSS7</id>
        <label>MFSD6</label>
    </interactant>
    <organismsDiffer>false</organismsDiffer>
    <experiments>3</experiments>
</comment>
<comment type="interaction">
    <interactant intactId="EBI-12195249">
        <id>Q5TGU0</id>
    </interactant>
    <interactant intactId="EBI-2808234">
        <id>P11836</id>
        <label>MS4A1</label>
    </interactant>
    <organismsDiffer>false</organismsDiffer>
    <experiments>3</experiments>
</comment>
<comment type="interaction">
    <interactant intactId="EBI-12195249">
        <id>Q5TGU0</id>
    </interactant>
    <interactant intactId="EBI-716063">
        <id>Q13113</id>
        <label>PDZK1IP1</label>
    </interactant>
    <organismsDiffer>false</organismsDiffer>
    <experiments>3</experiments>
</comment>
<comment type="interaction">
    <interactant intactId="EBI-12195249">
        <id>Q5TGU0</id>
    </interactant>
    <interactant intactId="EBI-949945">
        <id>Q53GL0</id>
        <label>PLEKHO1</label>
    </interactant>
    <organismsDiffer>false</organismsDiffer>
    <experiments>3</experiments>
</comment>
<comment type="interaction">
    <interactant intactId="EBI-12195249">
        <id>Q5TGU0</id>
    </interactant>
    <interactant intactId="EBI-10269209">
        <id>Q8NC24</id>
        <label>RELL2</label>
    </interactant>
    <organismsDiffer>false</organismsDiffer>
    <experiments>3</experiments>
</comment>
<comment type="interaction">
    <interactant intactId="EBI-12195249">
        <id>Q5TGU0</id>
    </interactant>
    <interactant intactId="EBI-10192441">
        <id>Q86VR2</id>
        <label>RETREG3</label>
    </interactant>
    <organismsDiffer>false</organismsDiffer>
    <experiments>5</experiments>
</comment>
<comment type="interaction">
    <interactant intactId="EBI-12195249">
        <id>Q5TGU0</id>
    </interactant>
    <interactant intactId="EBI-1052363">
        <id>Q9NS64</id>
        <label>RPRM</label>
    </interactant>
    <organismsDiffer>false</organismsDiffer>
    <experiments>3</experiments>
</comment>
<comment type="interaction">
    <interactant intactId="EBI-12195249">
        <id>Q5TGU0</id>
    </interactant>
    <interactant intactId="EBI-3923031">
        <id>Q14973</id>
        <label>SLC10A1</label>
    </interactant>
    <organismsDiffer>false</organismsDiffer>
    <experiments>3</experiments>
</comment>
<comment type="interaction">
    <interactant intactId="EBI-12195249">
        <id>Q5TGU0</id>
    </interactant>
    <interactant intactId="EBI-18159983">
        <id>Q3KNW5</id>
        <label>SLC10A6</label>
    </interactant>
    <organismsDiffer>false</organismsDiffer>
    <experiments>3</experiments>
</comment>
<comment type="interaction">
    <interactant intactId="EBI-12195249">
        <id>Q5TGU0</id>
    </interactant>
    <interactant intactId="EBI-12811757">
        <id>O95436-2</id>
        <label>SLC34A2</label>
    </interactant>
    <organismsDiffer>false</organismsDiffer>
    <experiments>3</experiments>
</comment>
<comment type="interaction">
    <interactant intactId="EBI-12195249">
        <id>Q5TGU0</id>
    </interactant>
    <interactant intactId="EBI-7225508">
        <id>Q96GZ6</id>
        <label>SLC41A3</label>
    </interactant>
    <organismsDiffer>false</organismsDiffer>
    <experiments>3</experiments>
</comment>
<comment type="interaction">
    <interactant intactId="EBI-12195249">
        <id>Q5TGU0</id>
    </interactant>
    <interactant intactId="EBI-4289564">
        <id>P30825</id>
        <label>SLC7A1</label>
    </interactant>
    <organismsDiffer>false</organismsDiffer>
    <experiments>3</experiments>
</comment>
<comment type="interaction">
    <interactant intactId="EBI-12195249">
        <id>Q5TGU0</id>
    </interactant>
    <interactant intactId="EBI-10819434">
        <id>Q9NPE6</id>
        <label>SPAG4</label>
    </interactant>
    <organismsDiffer>false</organismsDiffer>
    <experiments>3</experiments>
</comment>
<comment type="interaction">
    <interactant intactId="EBI-12195249">
        <id>Q5TGU0</id>
    </interactant>
    <interactant intactId="EBI-1211440">
        <id>P27105</id>
        <label>STOM</label>
    </interactant>
    <organismsDiffer>false</organismsDiffer>
    <experiments>3</experiments>
</comment>
<comment type="interaction">
    <interactant intactId="EBI-12195249">
        <id>Q5TGU0</id>
    </interactant>
    <interactant intactId="EBI-8032987">
        <id>Q8N9I0</id>
        <label>SYT2</label>
    </interactant>
    <organismsDiffer>false</organismsDiffer>
    <experiments>3</experiments>
</comment>
<comment type="interaction">
    <interactant intactId="EBI-12195249">
        <id>Q5TGU0</id>
    </interactant>
    <interactant intactId="EBI-2844246">
        <id>Q9NV12</id>
        <label>TMEM140</label>
    </interactant>
    <organismsDiffer>false</organismsDiffer>
    <experiments>3</experiments>
</comment>
<comment type="interaction">
    <interactant intactId="EBI-12195249">
        <id>Q5TGU0</id>
    </interactant>
    <interactant intactId="EBI-3922833">
        <id>Q969K7</id>
        <label>TMEM54</label>
    </interactant>
    <organismsDiffer>false</organismsDiffer>
    <experiments>3</experiments>
</comment>
<comment type="interaction">
    <interactant intactId="EBI-12195249">
        <id>Q5TGU0</id>
    </interactant>
    <interactant intactId="EBI-11742770">
        <id>Q96HE8</id>
        <label>TMEM80</label>
    </interactant>
    <organismsDiffer>false</organismsDiffer>
    <experiments>3</experiments>
</comment>
<comment type="interaction">
    <interactant intactId="EBI-12195249">
        <id>Q5TGU0</id>
    </interactant>
    <interactant intactId="EBI-744988">
        <id>Q9H7M9</id>
        <label>VSIR</label>
    </interactant>
    <organismsDiffer>false</organismsDiffer>
    <experiments>3</experiments>
</comment>
<comment type="subcellular location">
    <subcellularLocation>
        <location evidence="3">Endoplasmic reticulum membrane</location>
        <topology evidence="3">Multi-pass membrane protein</topology>
    </subcellularLocation>
    <subcellularLocation>
        <location evidence="4 6">Cell membrane</location>
        <topology>Multi-pass membrane protein</topology>
    </subcellularLocation>
    <text evidence="4 6">Localizes to the plasma membrane and intracellular membranes in developing and mature erythrocytes.</text>
</comment>
<comment type="alternative products">
    <event type="alternative splicing"/>
    <isoform>
        <id>Q5TGU0-1</id>
        <name>1</name>
        <sequence type="displayed"/>
    </isoform>
    <isoform>
        <id>Q5TGU0-2</id>
        <name>2</name>
        <sequence type="described" ref="VSP_026363 VSP_026364"/>
    </isoform>
</comment>
<comment type="tissue specificity">
    <text evidence="4">Expressed in erythrocytes (at protein level).</text>
</comment>
<comment type="developmental stage">
    <text evidence="4">Expression levels increase during erythrocyte differentiation.</text>
</comment>
<comment type="domain">
    <text evidence="1">The C-terminal region mediates cholesterol-binding.</text>
</comment>
<comment type="similarity">
    <text evidence="8">Belongs to the TspO/BZRP family.</text>
</comment>
<gene>
    <name type="primary">TSPO2</name>
    <name type="synonym">BZRPL1</name>
</gene>
<sequence>MRLQGAIFVLLPHLGPILVWLFTRDHMSGWCEGPRMLSWCPFYKVLLLVQTAIYSVVGYASYLVWKDLGGGLGWPLALPLGLYAVQLTISWTVLVLFFTVHNPGLALLHLLLLYGLVVSTALIWHPINKLAALLLLPYLAWLTVTSALTYHLWRDSLCPVHQPQPTEKSD</sequence>
<accession>Q5TGU0</accession>
<accession>B2RPR2</accession>
<accession>B7ZMN8</accession>
<accession>Q3SX82</accession>
<dbReference type="EMBL" id="AL031778">
    <property type="status" value="NOT_ANNOTATED_CDS"/>
    <property type="molecule type" value="Genomic_DNA"/>
</dbReference>
<dbReference type="EMBL" id="BC104440">
    <property type="protein sequence ID" value="AAI04441.1"/>
    <property type="molecule type" value="mRNA"/>
</dbReference>
<dbReference type="EMBL" id="BC104441">
    <property type="protein sequence ID" value="AAI04442.1"/>
    <property type="molecule type" value="mRNA"/>
</dbReference>
<dbReference type="EMBL" id="BC137560">
    <property type="protein sequence ID" value="AAI37561.1"/>
    <property type="molecule type" value="mRNA"/>
</dbReference>
<dbReference type="EMBL" id="BC137565">
    <property type="protein sequence ID" value="AAI37566.1"/>
    <property type="molecule type" value="mRNA"/>
</dbReference>
<dbReference type="EMBL" id="BC144710">
    <property type="protein sequence ID" value="AAI44711.1"/>
    <property type="molecule type" value="mRNA"/>
</dbReference>
<dbReference type="CCDS" id="CCDS34444.1">
    <molecule id="Q5TGU0-1"/>
</dbReference>
<dbReference type="RefSeq" id="NP_001010873.1">
    <molecule id="Q5TGU0-1"/>
    <property type="nucleotide sequence ID" value="NM_001010873.3"/>
</dbReference>
<dbReference type="RefSeq" id="NP_001153198.1">
    <molecule id="Q5TGU0-1"/>
    <property type="nucleotide sequence ID" value="NM_001159726.1"/>
</dbReference>
<dbReference type="RefSeq" id="XP_011512698.1">
    <molecule id="Q5TGU0-1"/>
    <property type="nucleotide sequence ID" value="XM_011514396.3"/>
</dbReference>
<dbReference type="RefSeq" id="XP_011512699.1">
    <molecule id="Q5TGU0-1"/>
    <property type="nucleotide sequence ID" value="XM_011514397.3"/>
</dbReference>
<dbReference type="RefSeq" id="XP_054210627.1">
    <molecule id="Q5TGU0-1"/>
    <property type="nucleotide sequence ID" value="XM_054354652.1"/>
</dbReference>
<dbReference type="RefSeq" id="XP_054210628.1">
    <molecule id="Q5TGU0-1"/>
    <property type="nucleotide sequence ID" value="XM_054354653.1"/>
</dbReference>
<dbReference type="SMR" id="Q5TGU0"/>
<dbReference type="BioGRID" id="128807">
    <property type="interactions" value="62"/>
</dbReference>
<dbReference type="FunCoup" id="Q5TGU0">
    <property type="interactions" value="13"/>
</dbReference>
<dbReference type="IntAct" id="Q5TGU0">
    <property type="interactions" value="55"/>
</dbReference>
<dbReference type="STRING" id="9606.ENSP00000362255"/>
<dbReference type="TCDB" id="9.A.24.1.17">
    <property type="family name" value="the mitochondrial cholesterol/porphyrin/5-aminolevulinic acid uptake translocator protein (tspo) family"/>
</dbReference>
<dbReference type="iPTMnet" id="Q5TGU0"/>
<dbReference type="PhosphoSitePlus" id="Q5TGU0"/>
<dbReference type="BioMuta" id="TSPO2"/>
<dbReference type="DMDM" id="74746518"/>
<dbReference type="PaxDb" id="9606-ENSP00000362255"/>
<dbReference type="Antibodypedia" id="76908">
    <property type="antibodies" value="4 antibodies from 4 providers"/>
</dbReference>
<dbReference type="DNASU" id="222642"/>
<dbReference type="Ensembl" id="ENST00000373158.6">
    <molecule id="Q5TGU0-2"/>
    <property type="protein sequence ID" value="ENSP00000362252.2"/>
    <property type="gene ID" value="ENSG00000112212.12"/>
</dbReference>
<dbReference type="Ensembl" id="ENST00000373161.6">
    <molecule id="Q5TGU0-1"/>
    <property type="protein sequence ID" value="ENSP00000362255.1"/>
    <property type="gene ID" value="ENSG00000112212.12"/>
</dbReference>
<dbReference type="Ensembl" id="ENST00000470917.1">
    <molecule id="Q5TGU0-1"/>
    <property type="protein sequence ID" value="ENSP00000419985.1"/>
    <property type="gene ID" value="ENSG00000112212.12"/>
</dbReference>
<dbReference type="GeneID" id="222642"/>
<dbReference type="KEGG" id="hsa:222642"/>
<dbReference type="MANE-Select" id="ENST00000373161.6">
    <property type="protein sequence ID" value="ENSP00000362255.1"/>
    <property type="RefSeq nucleotide sequence ID" value="NM_001010873.3"/>
    <property type="RefSeq protein sequence ID" value="NP_001010873.1"/>
</dbReference>
<dbReference type="UCSC" id="uc003opj.4">
    <molecule id="Q5TGU0-1"/>
    <property type="organism name" value="human"/>
</dbReference>
<dbReference type="AGR" id="HGNC:21256"/>
<dbReference type="CTD" id="222642"/>
<dbReference type="DisGeNET" id="222642"/>
<dbReference type="GeneCards" id="TSPO2"/>
<dbReference type="HGNC" id="HGNC:21256">
    <property type="gene designation" value="TSPO2"/>
</dbReference>
<dbReference type="HPA" id="ENSG00000112212">
    <property type="expression patterns" value="Tissue enriched (bone)"/>
</dbReference>
<dbReference type="MIM" id="619409">
    <property type="type" value="gene"/>
</dbReference>
<dbReference type="neXtProt" id="NX_Q5TGU0"/>
<dbReference type="OpenTargets" id="ENSG00000112212"/>
<dbReference type="PharmGKB" id="PA165618396"/>
<dbReference type="VEuPathDB" id="HostDB:ENSG00000112212"/>
<dbReference type="eggNOG" id="KOG3797">
    <property type="taxonomic scope" value="Eukaryota"/>
</dbReference>
<dbReference type="GeneTree" id="ENSGT00390000012980"/>
<dbReference type="HOGENOM" id="CLU_091805_2_1_1"/>
<dbReference type="InParanoid" id="Q5TGU0"/>
<dbReference type="OMA" id="RDSLCPE"/>
<dbReference type="OrthoDB" id="8841220at2759"/>
<dbReference type="PAN-GO" id="Q5TGU0">
    <property type="GO annotations" value="3 GO annotations based on evolutionary models"/>
</dbReference>
<dbReference type="PhylomeDB" id="Q5TGU0"/>
<dbReference type="TreeFam" id="TF342852"/>
<dbReference type="PathwayCommons" id="Q5TGU0"/>
<dbReference type="SignaLink" id="Q5TGU0"/>
<dbReference type="SIGNOR" id="Q5TGU0"/>
<dbReference type="BioGRID-ORCS" id="222642">
    <property type="hits" value="8 hits in 1137 CRISPR screens"/>
</dbReference>
<dbReference type="GenomeRNAi" id="222642"/>
<dbReference type="Pharos" id="Q5TGU0">
    <property type="development level" value="Tbio"/>
</dbReference>
<dbReference type="PRO" id="PR:Q5TGU0"/>
<dbReference type="Proteomes" id="UP000005640">
    <property type="component" value="Chromosome 6"/>
</dbReference>
<dbReference type="RNAct" id="Q5TGU0">
    <property type="molecule type" value="protein"/>
</dbReference>
<dbReference type="Bgee" id="ENSG00000112212">
    <property type="expression patterns" value="Expressed in trabecular bone tissue and 105 other cell types or tissues"/>
</dbReference>
<dbReference type="GO" id="GO:0005783">
    <property type="term" value="C:endoplasmic reticulum"/>
    <property type="evidence" value="ECO:0000250"/>
    <property type="project" value="UniProtKB"/>
</dbReference>
<dbReference type="GO" id="GO:0005789">
    <property type="term" value="C:endoplasmic reticulum membrane"/>
    <property type="evidence" value="ECO:0007669"/>
    <property type="project" value="UniProtKB-SubCell"/>
</dbReference>
<dbReference type="GO" id="GO:0005741">
    <property type="term" value="C:mitochondrial outer membrane"/>
    <property type="evidence" value="ECO:0000318"/>
    <property type="project" value="GO_Central"/>
</dbReference>
<dbReference type="GO" id="GO:0031090">
    <property type="term" value="C:organelle membrane"/>
    <property type="evidence" value="ECO:0000314"/>
    <property type="project" value="UniProtKB"/>
</dbReference>
<dbReference type="GO" id="GO:0005886">
    <property type="term" value="C:plasma membrane"/>
    <property type="evidence" value="ECO:0000314"/>
    <property type="project" value="HPA"/>
</dbReference>
<dbReference type="GO" id="GO:0140485">
    <property type="term" value="F:5-aminolevulinic acid transmembrane transporter activity"/>
    <property type="evidence" value="ECO:0000315"/>
    <property type="project" value="UniProtKB"/>
</dbReference>
<dbReference type="GO" id="GO:0015485">
    <property type="term" value="F:cholesterol binding"/>
    <property type="evidence" value="ECO:0000250"/>
    <property type="project" value="UniProtKB"/>
</dbReference>
<dbReference type="GO" id="GO:0140484">
    <property type="term" value="P:5-aminolevulinic acid import across plasma membrane"/>
    <property type="evidence" value="ECO:0000315"/>
    <property type="project" value="UniProtKB"/>
</dbReference>
<dbReference type="GO" id="GO:0043353">
    <property type="term" value="P:enucleate erythrocyte differentiation"/>
    <property type="evidence" value="ECO:0000250"/>
    <property type="project" value="UniProtKB"/>
</dbReference>
<dbReference type="GO" id="GO:0098739">
    <property type="term" value="P:import across plasma membrane"/>
    <property type="evidence" value="ECO:0000314"/>
    <property type="project" value="UniProtKB"/>
</dbReference>
<dbReference type="GO" id="GO:0032367">
    <property type="term" value="P:intracellular cholesterol transport"/>
    <property type="evidence" value="ECO:0000250"/>
    <property type="project" value="UniProtKB"/>
</dbReference>
<dbReference type="GO" id="GO:0034389">
    <property type="term" value="P:lipid droplet organization"/>
    <property type="evidence" value="ECO:0000250"/>
    <property type="project" value="UniProtKB"/>
</dbReference>
<dbReference type="FunFam" id="1.20.1260.100:FF:000001">
    <property type="entry name" value="translocator protein 2"/>
    <property type="match status" value="1"/>
</dbReference>
<dbReference type="Gene3D" id="1.20.1260.100">
    <property type="entry name" value="TspO/MBR protein"/>
    <property type="match status" value="1"/>
</dbReference>
<dbReference type="InterPro" id="IPR038330">
    <property type="entry name" value="TspO/MBR-related_sf"/>
</dbReference>
<dbReference type="InterPro" id="IPR004307">
    <property type="entry name" value="TspO_MBR"/>
</dbReference>
<dbReference type="PANTHER" id="PTHR10057">
    <property type="entry name" value="PERIPHERAL-TYPE BENZODIAZEPINE RECEPTOR"/>
    <property type="match status" value="1"/>
</dbReference>
<dbReference type="PANTHER" id="PTHR10057:SF4">
    <property type="entry name" value="TRANSLOCATOR PROTEIN 2"/>
    <property type="match status" value="1"/>
</dbReference>
<dbReference type="Pfam" id="PF03073">
    <property type="entry name" value="TspO_MBR"/>
    <property type="match status" value="1"/>
</dbReference>
<dbReference type="PIRSF" id="PIRSF005859">
    <property type="entry name" value="PBR"/>
    <property type="match status" value="1"/>
</dbReference>
<proteinExistence type="evidence at protein level"/>
<evidence type="ECO:0000250" key="1">
    <source>
        <dbReference type="UniProtKB" id="Q9CRZ8"/>
    </source>
</evidence>
<evidence type="ECO:0000255" key="2"/>
<evidence type="ECO:0000269" key="3">
    <source>
    </source>
</evidence>
<evidence type="ECO:0000269" key="4">
    <source>
    </source>
</evidence>
<evidence type="ECO:0000269" key="5">
    <source>
    </source>
</evidence>
<evidence type="ECO:0000269" key="6">
    <source>
    </source>
</evidence>
<evidence type="ECO:0000303" key="7">
    <source>
    </source>
</evidence>
<evidence type="ECO:0000305" key="8"/>
<keyword id="KW-0025">Alternative splicing</keyword>
<keyword id="KW-1003">Cell membrane</keyword>
<keyword id="KW-0256">Endoplasmic reticulum</keyword>
<keyword id="KW-0472">Membrane</keyword>
<keyword id="KW-0675">Receptor</keyword>
<keyword id="KW-1185">Reference proteome</keyword>
<keyword id="KW-0812">Transmembrane</keyword>
<keyword id="KW-1133">Transmembrane helix</keyword>
<keyword id="KW-0813">Transport</keyword>
<reference key="1">
    <citation type="journal article" date="2003" name="Nature">
        <title>The DNA sequence and analysis of human chromosome 6.</title>
        <authorList>
            <person name="Mungall A.J."/>
            <person name="Palmer S.A."/>
            <person name="Sims S.K."/>
            <person name="Edwards C.A."/>
            <person name="Ashurst J.L."/>
            <person name="Wilming L."/>
            <person name="Jones M.C."/>
            <person name="Horton R."/>
            <person name="Hunt S.E."/>
            <person name="Scott C.E."/>
            <person name="Gilbert J.G.R."/>
            <person name="Clamp M.E."/>
            <person name="Bethel G."/>
            <person name="Milne S."/>
            <person name="Ainscough R."/>
            <person name="Almeida J.P."/>
            <person name="Ambrose K.D."/>
            <person name="Andrews T.D."/>
            <person name="Ashwell R.I.S."/>
            <person name="Babbage A.K."/>
            <person name="Bagguley C.L."/>
            <person name="Bailey J."/>
            <person name="Banerjee R."/>
            <person name="Barker D.J."/>
            <person name="Barlow K.F."/>
            <person name="Bates K."/>
            <person name="Beare D.M."/>
            <person name="Beasley H."/>
            <person name="Beasley O."/>
            <person name="Bird C.P."/>
            <person name="Blakey S.E."/>
            <person name="Bray-Allen S."/>
            <person name="Brook J."/>
            <person name="Brown A.J."/>
            <person name="Brown J.Y."/>
            <person name="Burford D.C."/>
            <person name="Burrill W."/>
            <person name="Burton J."/>
            <person name="Carder C."/>
            <person name="Carter N.P."/>
            <person name="Chapman J.C."/>
            <person name="Clark S.Y."/>
            <person name="Clark G."/>
            <person name="Clee C.M."/>
            <person name="Clegg S."/>
            <person name="Cobley V."/>
            <person name="Collier R.E."/>
            <person name="Collins J.E."/>
            <person name="Colman L.K."/>
            <person name="Corby N.R."/>
            <person name="Coville G.J."/>
            <person name="Culley K.M."/>
            <person name="Dhami P."/>
            <person name="Davies J."/>
            <person name="Dunn M."/>
            <person name="Earthrowl M.E."/>
            <person name="Ellington A.E."/>
            <person name="Evans K.A."/>
            <person name="Faulkner L."/>
            <person name="Francis M.D."/>
            <person name="Frankish A."/>
            <person name="Frankland J."/>
            <person name="French L."/>
            <person name="Garner P."/>
            <person name="Garnett J."/>
            <person name="Ghori M.J."/>
            <person name="Gilby L.M."/>
            <person name="Gillson C.J."/>
            <person name="Glithero R.J."/>
            <person name="Grafham D.V."/>
            <person name="Grant M."/>
            <person name="Gribble S."/>
            <person name="Griffiths C."/>
            <person name="Griffiths M.N.D."/>
            <person name="Hall R."/>
            <person name="Halls K.S."/>
            <person name="Hammond S."/>
            <person name="Harley J.L."/>
            <person name="Hart E.A."/>
            <person name="Heath P.D."/>
            <person name="Heathcott R."/>
            <person name="Holmes S.J."/>
            <person name="Howden P.J."/>
            <person name="Howe K.L."/>
            <person name="Howell G.R."/>
            <person name="Huckle E."/>
            <person name="Humphray S.J."/>
            <person name="Humphries M.D."/>
            <person name="Hunt A.R."/>
            <person name="Johnson C.M."/>
            <person name="Joy A.A."/>
            <person name="Kay M."/>
            <person name="Keenan S.J."/>
            <person name="Kimberley A.M."/>
            <person name="King A."/>
            <person name="Laird G.K."/>
            <person name="Langford C."/>
            <person name="Lawlor S."/>
            <person name="Leongamornlert D.A."/>
            <person name="Leversha M."/>
            <person name="Lloyd C.R."/>
            <person name="Lloyd D.M."/>
            <person name="Loveland J.E."/>
            <person name="Lovell J."/>
            <person name="Martin S."/>
            <person name="Mashreghi-Mohammadi M."/>
            <person name="Maslen G.L."/>
            <person name="Matthews L."/>
            <person name="McCann O.T."/>
            <person name="McLaren S.J."/>
            <person name="McLay K."/>
            <person name="McMurray A."/>
            <person name="Moore M.J.F."/>
            <person name="Mullikin J.C."/>
            <person name="Niblett D."/>
            <person name="Nickerson T."/>
            <person name="Novik K.L."/>
            <person name="Oliver K."/>
            <person name="Overton-Larty E.K."/>
            <person name="Parker A."/>
            <person name="Patel R."/>
            <person name="Pearce A.V."/>
            <person name="Peck A.I."/>
            <person name="Phillimore B.J.C.T."/>
            <person name="Phillips S."/>
            <person name="Plumb R.W."/>
            <person name="Porter K.M."/>
            <person name="Ramsey Y."/>
            <person name="Ranby S.A."/>
            <person name="Rice C.M."/>
            <person name="Ross M.T."/>
            <person name="Searle S.M."/>
            <person name="Sehra H.K."/>
            <person name="Sheridan E."/>
            <person name="Skuce C.D."/>
            <person name="Smith S."/>
            <person name="Smith M."/>
            <person name="Spraggon L."/>
            <person name="Squares S.L."/>
            <person name="Steward C.A."/>
            <person name="Sycamore N."/>
            <person name="Tamlyn-Hall G."/>
            <person name="Tester J."/>
            <person name="Theaker A.J."/>
            <person name="Thomas D.W."/>
            <person name="Thorpe A."/>
            <person name="Tracey A."/>
            <person name="Tromans A."/>
            <person name="Tubby B."/>
            <person name="Wall M."/>
            <person name="Wallis J.M."/>
            <person name="West A.P."/>
            <person name="White S.S."/>
            <person name="Whitehead S.L."/>
            <person name="Whittaker H."/>
            <person name="Wild A."/>
            <person name="Willey D.J."/>
            <person name="Wilmer T.E."/>
            <person name="Wood J.M."/>
            <person name="Wray P.W."/>
            <person name="Wyatt J.C."/>
            <person name="Young L."/>
            <person name="Younger R.M."/>
            <person name="Bentley D.R."/>
            <person name="Coulson A."/>
            <person name="Durbin R.M."/>
            <person name="Hubbard T."/>
            <person name="Sulston J.E."/>
            <person name="Dunham I."/>
            <person name="Rogers J."/>
            <person name="Beck S."/>
        </authorList>
    </citation>
    <scope>NUCLEOTIDE SEQUENCE [LARGE SCALE GENOMIC DNA]</scope>
</reference>
<reference key="2">
    <citation type="journal article" date="2004" name="Genome Res.">
        <title>The status, quality, and expansion of the NIH full-length cDNA project: the Mammalian Gene Collection (MGC).</title>
        <authorList>
            <consortium name="The MGC Project Team"/>
        </authorList>
    </citation>
    <scope>NUCLEOTIDE SEQUENCE [LARGE SCALE MRNA] (ISOFORMS 1 AND 2)</scope>
</reference>
<reference key="3">
    <citation type="journal article" date="2009" name="J. Biol. Chem.">
        <title>Translocator protein 2 is involved in cholesterol redistribution during erythropoiesis.</title>
        <authorList>
            <person name="Fan J."/>
            <person name="Rone M.B."/>
            <person name="Papadopoulos V."/>
        </authorList>
    </citation>
    <scope>FUNCTION</scope>
    <scope>SUBCELLULAR LOCATION</scope>
</reference>
<reference key="4">
    <citation type="journal article" date="2016" name="Sci. Rep.">
        <title>TSPO ligands stimulate ZnPPIX transport and ROS accumulation leading to the inhibition of P. falciparum growth in human blood.</title>
        <authorList>
            <person name="Marginedas-Freixa I."/>
            <person name="Hattab C."/>
            <person name="Bouyer G."/>
            <person name="Halle F."/>
            <person name="Chene A."/>
            <person name="Lefevre S.D."/>
            <person name="Cambot M."/>
            <person name="Cueff A."/>
            <person name="Schmitt M."/>
            <person name="Gamain B."/>
            <person name="Lacapere J.J."/>
            <person name="Egee S."/>
            <person name="Bihel F."/>
            <person name="Le Van Kim C."/>
            <person name="Ostuni M.A."/>
        </authorList>
    </citation>
    <scope>FUNCTION</scope>
    <scope>SUBUNIT</scope>
    <scope>SUBCELLULAR LOCATION</scope>
    <scope>TISSUE SPECIFICITY</scope>
    <scope>DEVELOPMENTAL STAGE</scope>
    <scope>IDENTIFICATION BY MASS SPECTROMETRY</scope>
</reference>
<reference key="5">
    <citation type="journal article" date="2018" name="Sci. Rep.">
        <title>Human erythrocytes release ATP by a novel pathway involving VDAC oligomerization independent of pannexin-1.</title>
        <authorList>
            <person name="Marginedas-Freixa I."/>
            <person name="Alvarez C.L."/>
            <person name="Moras M."/>
            <person name="Leal Denis M.F."/>
            <person name="Hattab C."/>
            <person name="Halle F."/>
            <person name="Bihel F."/>
            <person name="Mouro-Chanteloup I."/>
            <person name="Lefevre S.D."/>
            <person name="Le Van Kim C."/>
            <person name="Schwarzbaum P.J."/>
            <person name="Ostuni M.A."/>
        </authorList>
    </citation>
    <scope>FUNCTION</scope>
</reference>
<reference key="6">
    <citation type="journal article" date="2020" name="Biol. Cell">
        <title>TSPO2 translocates 5-aminolevulinic acid into human erythroleukemia cells.</title>
        <authorList>
            <person name="Manceau H."/>
            <person name="Lefevre S.D."/>
            <person name="Mirmiran A."/>
            <person name="Hattab C."/>
            <person name="Sugier H.R."/>
            <person name="Schmitt C."/>
            <person name="Peoc'h K."/>
            <person name="Puy H."/>
            <person name="Ostuni M.A."/>
            <person name="Gouya L."/>
            <person name="Lacapere J.J."/>
        </authorList>
    </citation>
    <scope>FUNCTION</scope>
    <scope>SUBCELLULAR LOCATION</scope>
</reference>
<protein>
    <recommendedName>
        <fullName>Translocator protein 2</fullName>
    </recommendedName>
    <alternativeName>
        <fullName>Peripheral-type benzodiazepine receptor-like protein 1</fullName>
    </alternativeName>
</protein>
<feature type="chain" id="PRO_0000292005" description="Translocator protein 2">
    <location>
        <begin position="1"/>
        <end position="170"/>
    </location>
</feature>
<feature type="transmembrane region" description="Helical" evidence="2">
    <location>
        <begin position="3"/>
        <end position="23"/>
    </location>
</feature>
<feature type="transmembrane region" description="Helical" evidence="2">
    <location>
        <begin position="45"/>
        <end position="65"/>
    </location>
</feature>
<feature type="transmembrane region" description="Helical" evidence="2">
    <location>
        <begin position="78"/>
        <end position="98"/>
    </location>
</feature>
<feature type="transmembrane region" description="Helical" evidence="2">
    <location>
        <begin position="104"/>
        <end position="124"/>
    </location>
</feature>
<feature type="transmembrane region" description="Helical" evidence="2">
    <location>
        <begin position="130"/>
        <end position="150"/>
    </location>
</feature>
<feature type="splice variant" id="VSP_026363" description="In isoform 2." evidence="7">
    <original>YASYLVWKDLGG</original>
    <variation>PCCTCCCCMGWW</variation>
    <location>
        <begin position="59"/>
        <end position="70"/>
    </location>
</feature>
<feature type="splice variant" id="VSP_026364" description="In isoform 2." evidence="7">
    <location>
        <begin position="71"/>
        <end position="170"/>
    </location>
</feature>
<organism>
    <name type="scientific">Homo sapiens</name>
    <name type="common">Human</name>
    <dbReference type="NCBI Taxonomy" id="9606"/>
    <lineage>
        <taxon>Eukaryota</taxon>
        <taxon>Metazoa</taxon>
        <taxon>Chordata</taxon>
        <taxon>Craniata</taxon>
        <taxon>Vertebrata</taxon>
        <taxon>Euteleostomi</taxon>
        <taxon>Mammalia</taxon>
        <taxon>Eutheria</taxon>
        <taxon>Euarchontoglires</taxon>
        <taxon>Primates</taxon>
        <taxon>Haplorrhini</taxon>
        <taxon>Catarrhini</taxon>
        <taxon>Hominidae</taxon>
        <taxon>Homo</taxon>
    </lineage>
</organism>